<protein>
    <recommendedName>
        <fullName evidence="1">Adenylate kinase</fullName>
        <shortName evidence="1">AK</shortName>
        <ecNumber evidence="1">2.7.4.3</ecNumber>
    </recommendedName>
    <alternativeName>
        <fullName evidence="1">ATP-AMP transphosphorylase</fullName>
    </alternativeName>
    <alternativeName>
        <fullName evidence="1">ATP:AMP phosphotransferase</fullName>
    </alternativeName>
    <alternativeName>
        <fullName evidence="1">Adenylate monophosphate kinase</fullName>
    </alternativeName>
</protein>
<proteinExistence type="inferred from homology"/>
<comment type="function">
    <text evidence="1">Catalyzes the reversible transfer of the terminal phosphate group between ATP and AMP. Plays an important role in cellular energy homeostasis and in adenine nucleotide metabolism.</text>
</comment>
<comment type="catalytic activity">
    <reaction evidence="1">
        <text>AMP + ATP = 2 ADP</text>
        <dbReference type="Rhea" id="RHEA:12973"/>
        <dbReference type="ChEBI" id="CHEBI:30616"/>
        <dbReference type="ChEBI" id="CHEBI:456215"/>
        <dbReference type="ChEBI" id="CHEBI:456216"/>
        <dbReference type="EC" id="2.7.4.3"/>
    </reaction>
</comment>
<comment type="pathway">
    <text evidence="1">Purine metabolism; AMP biosynthesis via salvage pathway; AMP from ADP: step 1/1.</text>
</comment>
<comment type="subunit">
    <text evidence="1">Monomer.</text>
</comment>
<comment type="subcellular location">
    <subcellularLocation>
        <location evidence="1">Cytoplasm</location>
    </subcellularLocation>
</comment>
<comment type="domain">
    <text evidence="1">Consists of three domains, a large central CORE domain and two small peripheral domains, NMPbind and LID, which undergo movements during catalysis. The LID domain closes over the site of phosphoryl transfer upon ATP binding. Assembling and dissambling the active center during each catalytic cycle provides an effective means to prevent ATP hydrolysis. Some bacteria have evolved a zinc-coordinating structure that stabilizes the LID domain.</text>
</comment>
<comment type="similarity">
    <text evidence="1">Belongs to the adenylate kinase family.</text>
</comment>
<keyword id="KW-0067">ATP-binding</keyword>
<keyword id="KW-0963">Cytoplasm</keyword>
<keyword id="KW-0418">Kinase</keyword>
<keyword id="KW-0479">Metal-binding</keyword>
<keyword id="KW-0545">Nucleotide biosynthesis</keyword>
<keyword id="KW-0547">Nucleotide-binding</keyword>
<keyword id="KW-1185">Reference proteome</keyword>
<keyword id="KW-0808">Transferase</keyword>
<keyword id="KW-0862">Zinc</keyword>
<reference key="1">
    <citation type="journal article" date="2009" name="J. Bacteriol.">
        <title>Complete genome sequence of Erythrobacter litoralis HTCC2594.</title>
        <authorList>
            <person name="Oh H.M."/>
            <person name="Giovannoni S.J."/>
            <person name="Ferriera S."/>
            <person name="Johnson J."/>
            <person name="Cho J.C."/>
        </authorList>
    </citation>
    <scope>NUCLEOTIDE SEQUENCE [LARGE SCALE GENOMIC DNA]</scope>
    <source>
        <strain>HTCC2594</strain>
    </source>
</reference>
<evidence type="ECO:0000255" key="1">
    <source>
        <dbReference type="HAMAP-Rule" id="MF_00235"/>
    </source>
</evidence>
<sequence length="214" mass="23368">MNIILLGPPGAGKGTQSQRLVERHGMRQLSTGDMLRAAVKAQTPVGLKAKAVMDRGELVSDDIVSELIDAELTAMHGNVGAIFDGYPRTAAQAGQLDVILAKHDRSLDKVIELEVNEEALVDRITGRFTCAKCGTGYHDRHKQPAREGVCDVCGSTEFKRRPDDNEETVRTRMQEYRAKTAPILPIYEERGLVERVDGMGGIDEVTAAIDALLK</sequence>
<name>KAD_ERYLH</name>
<organism>
    <name type="scientific">Erythrobacter litoralis (strain HTCC2594)</name>
    <dbReference type="NCBI Taxonomy" id="314225"/>
    <lineage>
        <taxon>Bacteria</taxon>
        <taxon>Pseudomonadati</taxon>
        <taxon>Pseudomonadota</taxon>
        <taxon>Alphaproteobacteria</taxon>
        <taxon>Sphingomonadales</taxon>
        <taxon>Erythrobacteraceae</taxon>
        <taxon>Erythrobacter/Porphyrobacter group</taxon>
        <taxon>Erythrobacter</taxon>
    </lineage>
</organism>
<gene>
    <name evidence="1" type="primary">adk</name>
    <name type="ordered locus">ELI_08080</name>
</gene>
<feature type="chain" id="PRO_1000021727" description="Adenylate kinase">
    <location>
        <begin position="1"/>
        <end position="214"/>
    </location>
</feature>
<feature type="region of interest" description="NMP" evidence="1">
    <location>
        <begin position="30"/>
        <end position="59"/>
    </location>
</feature>
<feature type="region of interest" description="LID" evidence="1">
    <location>
        <begin position="126"/>
        <end position="163"/>
    </location>
</feature>
<feature type="binding site" evidence="1">
    <location>
        <begin position="10"/>
        <end position="15"/>
    </location>
    <ligand>
        <name>ATP</name>
        <dbReference type="ChEBI" id="CHEBI:30616"/>
    </ligand>
</feature>
<feature type="binding site" evidence="1">
    <location>
        <position position="31"/>
    </location>
    <ligand>
        <name>AMP</name>
        <dbReference type="ChEBI" id="CHEBI:456215"/>
    </ligand>
</feature>
<feature type="binding site" evidence="1">
    <location>
        <position position="36"/>
    </location>
    <ligand>
        <name>AMP</name>
        <dbReference type="ChEBI" id="CHEBI:456215"/>
    </ligand>
</feature>
<feature type="binding site" evidence="1">
    <location>
        <begin position="57"/>
        <end position="59"/>
    </location>
    <ligand>
        <name>AMP</name>
        <dbReference type="ChEBI" id="CHEBI:456215"/>
    </ligand>
</feature>
<feature type="binding site" evidence="1">
    <location>
        <begin position="85"/>
        <end position="88"/>
    </location>
    <ligand>
        <name>AMP</name>
        <dbReference type="ChEBI" id="CHEBI:456215"/>
    </ligand>
</feature>
<feature type="binding site" evidence="1">
    <location>
        <position position="92"/>
    </location>
    <ligand>
        <name>AMP</name>
        <dbReference type="ChEBI" id="CHEBI:456215"/>
    </ligand>
</feature>
<feature type="binding site" evidence="1">
    <location>
        <position position="127"/>
    </location>
    <ligand>
        <name>ATP</name>
        <dbReference type="ChEBI" id="CHEBI:30616"/>
    </ligand>
</feature>
<feature type="binding site" evidence="1">
    <location>
        <position position="130"/>
    </location>
    <ligand>
        <name>Zn(2+)</name>
        <dbReference type="ChEBI" id="CHEBI:29105"/>
        <note>structural</note>
    </ligand>
</feature>
<feature type="binding site" evidence="1">
    <location>
        <position position="133"/>
    </location>
    <ligand>
        <name>Zn(2+)</name>
        <dbReference type="ChEBI" id="CHEBI:29105"/>
        <note>structural</note>
    </ligand>
</feature>
<feature type="binding site" evidence="1">
    <location>
        <position position="150"/>
    </location>
    <ligand>
        <name>Zn(2+)</name>
        <dbReference type="ChEBI" id="CHEBI:29105"/>
        <note>structural</note>
    </ligand>
</feature>
<feature type="binding site" evidence="1">
    <location>
        <position position="153"/>
    </location>
    <ligand>
        <name>Zn(2+)</name>
        <dbReference type="ChEBI" id="CHEBI:29105"/>
        <note>structural</note>
    </ligand>
</feature>
<feature type="binding site" evidence="1">
    <location>
        <position position="160"/>
    </location>
    <ligand>
        <name>AMP</name>
        <dbReference type="ChEBI" id="CHEBI:456215"/>
    </ligand>
</feature>
<feature type="binding site" evidence="1">
    <location>
        <position position="172"/>
    </location>
    <ligand>
        <name>AMP</name>
        <dbReference type="ChEBI" id="CHEBI:456215"/>
    </ligand>
</feature>
<feature type="binding site" evidence="1">
    <location>
        <position position="200"/>
    </location>
    <ligand>
        <name>ATP</name>
        <dbReference type="ChEBI" id="CHEBI:30616"/>
    </ligand>
</feature>
<accession>Q2N9D3</accession>
<dbReference type="EC" id="2.7.4.3" evidence="1"/>
<dbReference type="EMBL" id="CP000157">
    <property type="protein sequence ID" value="ABC63708.1"/>
    <property type="molecule type" value="Genomic_DNA"/>
</dbReference>
<dbReference type="RefSeq" id="WP_011414540.1">
    <property type="nucleotide sequence ID" value="NC_007722.1"/>
</dbReference>
<dbReference type="SMR" id="Q2N9D3"/>
<dbReference type="STRING" id="314225.ELI_08080"/>
<dbReference type="KEGG" id="eli:ELI_08080"/>
<dbReference type="eggNOG" id="COG0563">
    <property type="taxonomic scope" value="Bacteria"/>
</dbReference>
<dbReference type="HOGENOM" id="CLU_032354_1_2_5"/>
<dbReference type="OrthoDB" id="9805030at2"/>
<dbReference type="UniPathway" id="UPA00588">
    <property type="reaction ID" value="UER00649"/>
</dbReference>
<dbReference type="Proteomes" id="UP000008808">
    <property type="component" value="Chromosome"/>
</dbReference>
<dbReference type="GO" id="GO:0005737">
    <property type="term" value="C:cytoplasm"/>
    <property type="evidence" value="ECO:0007669"/>
    <property type="project" value="UniProtKB-SubCell"/>
</dbReference>
<dbReference type="GO" id="GO:0004017">
    <property type="term" value="F:adenylate kinase activity"/>
    <property type="evidence" value="ECO:0007669"/>
    <property type="project" value="UniProtKB-UniRule"/>
</dbReference>
<dbReference type="GO" id="GO:0005524">
    <property type="term" value="F:ATP binding"/>
    <property type="evidence" value="ECO:0007669"/>
    <property type="project" value="UniProtKB-UniRule"/>
</dbReference>
<dbReference type="GO" id="GO:0008270">
    <property type="term" value="F:zinc ion binding"/>
    <property type="evidence" value="ECO:0007669"/>
    <property type="project" value="UniProtKB-UniRule"/>
</dbReference>
<dbReference type="GO" id="GO:0044209">
    <property type="term" value="P:AMP salvage"/>
    <property type="evidence" value="ECO:0007669"/>
    <property type="project" value="UniProtKB-UniRule"/>
</dbReference>
<dbReference type="CDD" id="cd01428">
    <property type="entry name" value="ADK"/>
    <property type="match status" value="1"/>
</dbReference>
<dbReference type="FunFam" id="3.40.50.300:FF:000106">
    <property type="entry name" value="Adenylate kinase mitochondrial"/>
    <property type="match status" value="1"/>
</dbReference>
<dbReference type="Gene3D" id="3.40.50.300">
    <property type="entry name" value="P-loop containing nucleotide triphosphate hydrolases"/>
    <property type="match status" value="1"/>
</dbReference>
<dbReference type="HAMAP" id="MF_00235">
    <property type="entry name" value="Adenylate_kinase_Adk"/>
    <property type="match status" value="1"/>
</dbReference>
<dbReference type="InterPro" id="IPR006259">
    <property type="entry name" value="Adenyl_kin_sub"/>
</dbReference>
<dbReference type="InterPro" id="IPR000850">
    <property type="entry name" value="Adenylat/UMP-CMP_kin"/>
</dbReference>
<dbReference type="InterPro" id="IPR033690">
    <property type="entry name" value="Adenylat_kinase_CS"/>
</dbReference>
<dbReference type="InterPro" id="IPR007862">
    <property type="entry name" value="Adenylate_kinase_lid-dom"/>
</dbReference>
<dbReference type="InterPro" id="IPR027417">
    <property type="entry name" value="P-loop_NTPase"/>
</dbReference>
<dbReference type="NCBIfam" id="TIGR01351">
    <property type="entry name" value="adk"/>
    <property type="match status" value="1"/>
</dbReference>
<dbReference type="NCBIfam" id="NF001380">
    <property type="entry name" value="PRK00279.1-2"/>
    <property type="match status" value="1"/>
</dbReference>
<dbReference type="NCBIfam" id="NF001381">
    <property type="entry name" value="PRK00279.1-3"/>
    <property type="match status" value="1"/>
</dbReference>
<dbReference type="NCBIfam" id="NF011100">
    <property type="entry name" value="PRK14527.1"/>
    <property type="match status" value="1"/>
</dbReference>
<dbReference type="NCBIfam" id="NF011105">
    <property type="entry name" value="PRK14532.1"/>
    <property type="match status" value="1"/>
</dbReference>
<dbReference type="PANTHER" id="PTHR23359">
    <property type="entry name" value="NUCLEOTIDE KINASE"/>
    <property type="match status" value="1"/>
</dbReference>
<dbReference type="Pfam" id="PF00406">
    <property type="entry name" value="ADK"/>
    <property type="match status" value="1"/>
</dbReference>
<dbReference type="Pfam" id="PF05191">
    <property type="entry name" value="ADK_lid"/>
    <property type="match status" value="1"/>
</dbReference>
<dbReference type="PRINTS" id="PR00094">
    <property type="entry name" value="ADENYLTKNASE"/>
</dbReference>
<dbReference type="SUPFAM" id="SSF52540">
    <property type="entry name" value="P-loop containing nucleoside triphosphate hydrolases"/>
    <property type="match status" value="1"/>
</dbReference>
<dbReference type="PROSITE" id="PS00113">
    <property type="entry name" value="ADENYLATE_KINASE"/>
    <property type="match status" value="1"/>
</dbReference>